<evidence type="ECO:0000255" key="1">
    <source>
        <dbReference type="HAMAP-Rule" id="MF_00097"/>
    </source>
</evidence>
<dbReference type="EC" id="2.5.1.3" evidence="1"/>
<dbReference type="EMBL" id="CP001176">
    <property type="protein sequence ID" value="ACK64106.1"/>
    <property type="molecule type" value="Genomic_DNA"/>
</dbReference>
<dbReference type="RefSeq" id="WP_000090960.1">
    <property type="nucleotide sequence ID" value="NC_011725.1"/>
</dbReference>
<dbReference type="SMR" id="B7H7H5"/>
<dbReference type="KEGG" id="bcb:BCB4264_A0440"/>
<dbReference type="HOGENOM" id="CLU_018272_3_2_9"/>
<dbReference type="UniPathway" id="UPA00060">
    <property type="reaction ID" value="UER00141"/>
</dbReference>
<dbReference type="Proteomes" id="UP000007096">
    <property type="component" value="Chromosome"/>
</dbReference>
<dbReference type="GO" id="GO:0005737">
    <property type="term" value="C:cytoplasm"/>
    <property type="evidence" value="ECO:0007669"/>
    <property type="project" value="TreeGrafter"/>
</dbReference>
<dbReference type="GO" id="GO:0000287">
    <property type="term" value="F:magnesium ion binding"/>
    <property type="evidence" value="ECO:0007669"/>
    <property type="project" value="UniProtKB-UniRule"/>
</dbReference>
<dbReference type="GO" id="GO:0004789">
    <property type="term" value="F:thiamine-phosphate diphosphorylase activity"/>
    <property type="evidence" value="ECO:0007669"/>
    <property type="project" value="UniProtKB-UniRule"/>
</dbReference>
<dbReference type="GO" id="GO:0009228">
    <property type="term" value="P:thiamine biosynthetic process"/>
    <property type="evidence" value="ECO:0007669"/>
    <property type="project" value="UniProtKB-KW"/>
</dbReference>
<dbReference type="GO" id="GO:0009229">
    <property type="term" value="P:thiamine diphosphate biosynthetic process"/>
    <property type="evidence" value="ECO:0007669"/>
    <property type="project" value="UniProtKB-UniRule"/>
</dbReference>
<dbReference type="CDD" id="cd00564">
    <property type="entry name" value="TMP_TenI"/>
    <property type="match status" value="1"/>
</dbReference>
<dbReference type="FunFam" id="3.20.20.70:FF:000096">
    <property type="entry name" value="Thiamine-phosphate synthase"/>
    <property type="match status" value="1"/>
</dbReference>
<dbReference type="Gene3D" id="3.20.20.70">
    <property type="entry name" value="Aldolase class I"/>
    <property type="match status" value="1"/>
</dbReference>
<dbReference type="HAMAP" id="MF_00097">
    <property type="entry name" value="TMP_synthase"/>
    <property type="match status" value="1"/>
</dbReference>
<dbReference type="InterPro" id="IPR013785">
    <property type="entry name" value="Aldolase_TIM"/>
</dbReference>
<dbReference type="InterPro" id="IPR036206">
    <property type="entry name" value="ThiamineP_synth_sf"/>
</dbReference>
<dbReference type="InterPro" id="IPR022998">
    <property type="entry name" value="ThiamineP_synth_TenI"/>
</dbReference>
<dbReference type="InterPro" id="IPR034291">
    <property type="entry name" value="TMP_synthase"/>
</dbReference>
<dbReference type="NCBIfam" id="TIGR00693">
    <property type="entry name" value="thiE"/>
    <property type="match status" value="1"/>
</dbReference>
<dbReference type="PANTHER" id="PTHR20857">
    <property type="entry name" value="THIAMINE-PHOSPHATE PYROPHOSPHORYLASE"/>
    <property type="match status" value="1"/>
</dbReference>
<dbReference type="PANTHER" id="PTHR20857:SF15">
    <property type="entry name" value="THIAMINE-PHOSPHATE SYNTHASE"/>
    <property type="match status" value="1"/>
</dbReference>
<dbReference type="Pfam" id="PF02581">
    <property type="entry name" value="TMP-TENI"/>
    <property type="match status" value="1"/>
</dbReference>
<dbReference type="SUPFAM" id="SSF51391">
    <property type="entry name" value="Thiamin phosphate synthase"/>
    <property type="match status" value="1"/>
</dbReference>
<sequence length="219" mass="23601">MARIEIDKMSKLLQVYFIMGSNNCTRDPLAVLKEALDGGVTIFQFREKGEGSLIGEDRVRFAKELQTLCKEYSVPFIVNDDVELAIELDADGVHVGQDDEGITSVREKMGDKIIGVSAHTIEEARFAIENGADYLGVGPIFPTSTKKDTKAVQGTKGLAYFREQGITVPIVGIGGITIENTAAVIEAGADGVSVISAISLAESAYESTRKLAEEVKRSL</sequence>
<comment type="function">
    <text evidence="1">Condenses 4-methyl-5-(beta-hydroxyethyl)thiazole monophosphate (THZ-P) and 2-methyl-4-amino-5-hydroxymethyl pyrimidine pyrophosphate (HMP-PP) to form thiamine monophosphate (TMP).</text>
</comment>
<comment type="catalytic activity">
    <reaction evidence="1">
        <text>2-[(2R,5Z)-2-carboxy-4-methylthiazol-5(2H)-ylidene]ethyl phosphate + 4-amino-2-methyl-5-(diphosphooxymethyl)pyrimidine + 2 H(+) = thiamine phosphate + CO2 + diphosphate</text>
        <dbReference type="Rhea" id="RHEA:47844"/>
        <dbReference type="ChEBI" id="CHEBI:15378"/>
        <dbReference type="ChEBI" id="CHEBI:16526"/>
        <dbReference type="ChEBI" id="CHEBI:33019"/>
        <dbReference type="ChEBI" id="CHEBI:37575"/>
        <dbReference type="ChEBI" id="CHEBI:57841"/>
        <dbReference type="ChEBI" id="CHEBI:62899"/>
        <dbReference type="EC" id="2.5.1.3"/>
    </reaction>
</comment>
<comment type="catalytic activity">
    <reaction evidence="1">
        <text>2-(2-carboxy-4-methylthiazol-5-yl)ethyl phosphate + 4-amino-2-methyl-5-(diphosphooxymethyl)pyrimidine + 2 H(+) = thiamine phosphate + CO2 + diphosphate</text>
        <dbReference type="Rhea" id="RHEA:47848"/>
        <dbReference type="ChEBI" id="CHEBI:15378"/>
        <dbReference type="ChEBI" id="CHEBI:16526"/>
        <dbReference type="ChEBI" id="CHEBI:33019"/>
        <dbReference type="ChEBI" id="CHEBI:37575"/>
        <dbReference type="ChEBI" id="CHEBI:57841"/>
        <dbReference type="ChEBI" id="CHEBI:62890"/>
        <dbReference type="EC" id="2.5.1.3"/>
    </reaction>
</comment>
<comment type="catalytic activity">
    <reaction evidence="1">
        <text>4-methyl-5-(2-phosphooxyethyl)-thiazole + 4-amino-2-methyl-5-(diphosphooxymethyl)pyrimidine + H(+) = thiamine phosphate + diphosphate</text>
        <dbReference type="Rhea" id="RHEA:22328"/>
        <dbReference type="ChEBI" id="CHEBI:15378"/>
        <dbReference type="ChEBI" id="CHEBI:33019"/>
        <dbReference type="ChEBI" id="CHEBI:37575"/>
        <dbReference type="ChEBI" id="CHEBI:57841"/>
        <dbReference type="ChEBI" id="CHEBI:58296"/>
        <dbReference type="EC" id="2.5.1.3"/>
    </reaction>
</comment>
<comment type="cofactor">
    <cofactor evidence="1">
        <name>Mg(2+)</name>
        <dbReference type="ChEBI" id="CHEBI:18420"/>
    </cofactor>
    <text evidence="1">Binds 1 Mg(2+) ion per subunit.</text>
</comment>
<comment type="pathway">
    <text evidence="1">Cofactor biosynthesis; thiamine diphosphate biosynthesis; thiamine phosphate from 4-amino-2-methyl-5-diphosphomethylpyrimidine and 4-methyl-5-(2-phosphoethyl)-thiazole: step 1/1.</text>
</comment>
<comment type="similarity">
    <text evidence="1">Belongs to the thiamine-phosphate synthase family.</text>
</comment>
<reference key="1">
    <citation type="submission" date="2008-10" db="EMBL/GenBank/DDBJ databases">
        <title>Genome sequence of Bacillus cereus B4264.</title>
        <authorList>
            <person name="Dodson R.J."/>
            <person name="Durkin A.S."/>
            <person name="Rosovitz M.J."/>
            <person name="Rasko D.A."/>
            <person name="Hoffmaster A."/>
            <person name="Ravel J."/>
            <person name="Sutton G."/>
        </authorList>
    </citation>
    <scope>NUCLEOTIDE SEQUENCE [LARGE SCALE GENOMIC DNA]</scope>
    <source>
        <strain>B4264</strain>
    </source>
</reference>
<proteinExistence type="inferred from homology"/>
<accession>B7H7H5</accession>
<organism>
    <name type="scientific">Bacillus cereus (strain B4264)</name>
    <dbReference type="NCBI Taxonomy" id="405532"/>
    <lineage>
        <taxon>Bacteria</taxon>
        <taxon>Bacillati</taxon>
        <taxon>Bacillota</taxon>
        <taxon>Bacilli</taxon>
        <taxon>Bacillales</taxon>
        <taxon>Bacillaceae</taxon>
        <taxon>Bacillus</taxon>
        <taxon>Bacillus cereus group</taxon>
    </lineage>
</organism>
<name>THIE_BACC4</name>
<feature type="chain" id="PRO_1000117296" description="Thiamine-phosphate synthase">
    <location>
        <begin position="1"/>
        <end position="219"/>
    </location>
</feature>
<feature type="binding site" evidence="1">
    <location>
        <begin position="44"/>
        <end position="48"/>
    </location>
    <ligand>
        <name>4-amino-2-methyl-5-(diphosphooxymethyl)pyrimidine</name>
        <dbReference type="ChEBI" id="CHEBI:57841"/>
    </ligand>
</feature>
<feature type="binding site" evidence="1">
    <location>
        <position position="79"/>
    </location>
    <ligand>
        <name>4-amino-2-methyl-5-(diphosphooxymethyl)pyrimidine</name>
        <dbReference type="ChEBI" id="CHEBI:57841"/>
    </ligand>
</feature>
<feature type="binding site" evidence="1">
    <location>
        <position position="80"/>
    </location>
    <ligand>
        <name>Mg(2+)</name>
        <dbReference type="ChEBI" id="CHEBI:18420"/>
    </ligand>
</feature>
<feature type="binding site" evidence="1">
    <location>
        <position position="99"/>
    </location>
    <ligand>
        <name>Mg(2+)</name>
        <dbReference type="ChEBI" id="CHEBI:18420"/>
    </ligand>
</feature>
<feature type="binding site" evidence="1">
    <location>
        <position position="117"/>
    </location>
    <ligand>
        <name>4-amino-2-methyl-5-(diphosphooxymethyl)pyrimidine</name>
        <dbReference type="ChEBI" id="CHEBI:57841"/>
    </ligand>
</feature>
<feature type="binding site" evidence="1">
    <location>
        <begin position="143"/>
        <end position="145"/>
    </location>
    <ligand>
        <name>2-[(2R,5Z)-2-carboxy-4-methylthiazol-5(2H)-ylidene]ethyl phosphate</name>
        <dbReference type="ChEBI" id="CHEBI:62899"/>
    </ligand>
</feature>
<feature type="binding site" evidence="1">
    <location>
        <position position="146"/>
    </location>
    <ligand>
        <name>4-amino-2-methyl-5-(diphosphooxymethyl)pyrimidine</name>
        <dbReference type="ChEBI" id="CHEBI:57841"/>
    </ligand>
</feature>
<feature type="binding site" evidence="1">
    <location>
        <position position="175"/>
    </location>
    <ligand>
        <name>2-[(2R,5Z)-2-carboxy-4-methylthiazol-5(2H)-ylidene]ethyl phosphate</name>
        <dbReference type="ChEBI" id="CHEBI:62899"/>
    </ligand>
</feature>
<feature type="binding site" evidence="1">
    <location>
        <begin position="195"/>
        <end position="196"/>
    </location>
    <ligand>
        <name>2-[(2R,5Z)-2-carboxy-4-methylthiazol-5(2H)-ylidene]ethyl phosphate</name>
        <dbReference type="ChEBI" id="CHEBI:62899"/>
    </ligand>
</feature>
<keyword id="KW-0460">Magnesium</keyword>
<keyword id="KW-0479">Metal-binding</keyword>
<keyword id="KW-0784">Thiamine biosynthesis</keyword>
<keyword id="KW-0808">Transferase</keyword>
<gene>
    <name evidence="1" type="primary">thiE</name>
    <name type="ordered locus">BCB4264_A0440</name>
</gene>
<protein>
    <recommendedName>
        <fullName evidence="1">Thiamine-phosphate synthase</fullName>
        <shortName evidence="1">TP synthase</shortName>
        <shortName evidence="1">TPS</shortName>
        <ecNumber evidence="1">2.5.1.3</ecNumber>
    </recommendedName>
    <alternativeName>
        <fullName evidence="1">Thiamine-phosphate pyrophosphorylase</fullName>
        <shortName evidence="1">TMP pyrophosphorylase</shortName>
        <shortName evidence="1">TMP-PPase</shortName>
    </alternativeName>
</protein>